<keyword id="KW-0131">Cell cycle</keyword>
<keyword id="KW-0132">Cell division</keyword>
<keyword id="KW-0175">Coiled coil</keyword>
<keyword id="KW-0963">Cytoplasm</keyword>
<keyword id="KW-0238">DNA-binding</keyword>
<gene>
    <name evidence="1" type="primary">slmA</name>
    <name type="ordered locus">SEN3554</name>
</gene>
<organism>
    <name type="scientific">Salmonella enteritidis PT4 (strain P125109)</name>
    <dbReference type="NCBI Taxonomy" id="550537"/>
    <lineage>
        <taxon>Bacteria</taxon>
        <taxon>Pseudomonadati</taxon>
        <taxon>Pseudomonadota</taxon>
        <taxon>Gammaproteobacteria</taxon>
        <taxon>Enterobacterales</taxon>
        <taxon>Enterobacteriaceae</taxon>
        <taxon>Salmonella</taxon>
    </lineage>
</organism>
<accession>B5R5G5</accession>
<feature type="chain" id="PRO_1000188395" description="Nucleoid occlusion factor SlmA">
    <location>
        <begin position="1"/>
        <end position="198"/>
    </location>
</feature>
<feature type="domain" description="HTH tetR-type" evidence="1">
    <location>
        <begin position="10"/>
        <end position="70"/>
    </location>
</feature>
<feature type="DNA-binding region" description="H-T-H motif" evidence="1">
    <location>
        <begin position="33"/>
        <end position="52"/>
    </location>
</feature>
<feature type="coiled-coil region" evidence="1">
    <location>
        <begin position="117"/>
        <end position="144"/>
    </location>
</feature>
<comment type="function">
    <text evidence="1">Required for nucleoid occlusion (NO) phenomenon, which prevents Z-ring formation and cell division over the nucleoid. Acts as a DNA-associated cell division inhibitor that binds simultaneously chromosomal DNA and FtsZ, and disrupts the assembly of FtsZ polymers. SlmA-DNA-binding sequences (SBS) are dispersed on non-Ter regions of the chromosome, preventing FtsZ polymerization at these regions.</text>
</comment>
<comment type="subunit">
    <text evidence="1">Homodimer. Interacts with FtsZ.</text>
</comment>
<comment type="subcellular location">
    <subcellularLocation>
        <location evidence="1">Cytoplasm</location>
        <location evidence="1">Nucleoid</location>
    </subcellularLocation>
</comment>
<comment type="similarity">
    <text evidence="1">Belongs to the nucleoid occlusion factor SlmA family.</text>
</comment>
<reference key="1">
    <citation type="journal article" date="2008" name="Genome Res.">
        <title>Comparative genome analysis of Salmonella enteritidis PT4 and Salmonella gallinarum 287/91 provides insights into evolutionary and host adaptation pathways.</title>
        <authorList>
            <person name="Thomson N.R."/>
            <person name="Clayton D.J."/>
            <person name="Windhorst D."/>
            <person name="Vernikos G."/>
            <person name="Davidson S."/>
            <person name="Churcher C."/>
            <person name="Quail M.A."/>
            <person name="Stevens M."/>
            <person name="Jones M.A."/>
            <person name="Watson M."/>
            <person name="Barron A."/>
            <person name="Layton A."/>
            <person name="Pickard D."/>
            <person name="Kingsley R.A."/>
            <person name="Bignell A."/>
            <person name="Clark L."/>
            <person name="Harris B."/>
            <person name="Ormond D."/>
            <person name="Abdellah Z."/>
            <person name="Brooks K."/>
            <person name="Cherevach I."/>
            <person name="Chillingworth T."/>
            <person name="Woodward J."/>
            <person name="Norberczak H."/>
            <person name="Lord A."/>
            <person name="Arrowsmith C."/>
            <person name="Jagels K."/>
            <person name="Moule S."/>
            <person name="Mungall K."/>
            <person name="Saunders M."/>
            <person name="Whitehead S."/>
            <person name="Chabalgoity J.A."/>
            <person name="Maskell D."/>
            <person name="Humphreys T."/>
            <person name="Roberts M."/>
            <person name="Barrow P.A."/>
            <person name="Dougan G."/>
            <person name="Parkhill J."/>
        </authorList>
    </citation>
    <scope>NUCLEOTIDE SEQUENCE [LARGE SCALE GENOMIC DNA]</scope>
    <source>
        <strain>P125109</strain>
    </source>
</reference>
<evidence type="ECO:0000255" key="1">
    <source>
        <dbReference type="HAMAP-Rule" id="MF_01839"/>
    </source>
</evidence>
<protein>
    <recommendedName>
        <fullName evidence="1">Nucleoid occlusion factor SlmA</fullName>
    </recommendedName>
</protein>
<proteinExistence type="inferred from homology"/>
<sequence length="198" mass="22864">MAEKQTAKRNRREEILQSLALMLESSDGSQRITTAKLAASVGVSEAALYRHFPSKTRMFDSLIEFIEDSLITRINLILKDEKNTSTRLRLIVLLILGFGERNPGLTRILTGHALMFEQDRLQGRINQLFERIEAQLRQVLREKRMREGEGYTTDENLLASQLLAFCEGMLSRFVRSEFKYRPTDDFDARWPLIAAQLQ</sequence>
<name>SLMA_SALEP</name>
<dbReference type="EMBL" id="AM933172">
    <property type="protein sequence ID" value="CAR35133.1"/>
    <property type="molecule type" value="Genomic_DNA"/>
</dbReference>
<dbReference type="RefSeq" id="WP_000818607.1">
    <property type="nucleotide sequence ID" value="NC_011294.1"/>
</dbReference>
<dbReference type="SMR" id="B5R5G5"/>
<dbReference type="KEGG" id="set:SEN3554"/>
<dbReference type="HOGENOM" id="CLU_069356_5_0_6"/>
<dbReference type="Proteomes" id="UP000000613">
    <property type="component" value="Chromosome"/>
</dbReference>
<dbReference type="GO" id="GO:0043590">
    <property type="term" value="C:bacterial nucleoid"/>
    <property type="evidence" value="ECO:0007669"/>
    <property type="project" value="UniProtKB-UniRule"/>
</dbReference>
<dbReference type="GO" id="GO:0005737">
    <property type="term" value="C:cytoplasm"/>
    <property type="evidence" value="ECO:0007669"/>
    <property type="project" value="UniProtKB-UniRule"/>
</dbReference>
<dbReference type="GO" id="GO:0003700">
    <property type="term" value="F:DNA-binding transcription factor activity"/>
    <property type="evidence" value="ECO:0007669"/>
    <property type="project" value="TreeGrafter"/>
</dbReference>
<dbReference type="GO" id="GO:0000976">
    <property type="term" value="F:transcription cis-regulatory region binding"/>
    <property type="evidence" value="ECO:0007669"/>
    <property type="project" value="TreeGrafter"/>
</dbReference>
<dbReference type="GO" id="GO:0051301">
    <property type="term" value="P:cell division"/>
    <property type="evidence" value="ECO:0007669"/>
    <property type="project" value="UniProtKB-KW"/>
</dbReference>
<dbReference type="GO" id="GO:0010974">
    <property type="term" value="P:negative regulation of division septum assembly"/>
    <property type="evidence" value="ECO:0007669"/>
    <property type="project" value="InterPro"/>
</dbReference>
<dbReference type="FunFam" id="1.10.357.10:FF:000002">
    <property type="entry name" value="Nucleoid occlusion factor SlmA"/>
    <property type="match status" value="1"/>
</dbReference>
<dbReference type="Gene3D" id="1.10.357.10">
    <property type="entry name" value="Tetracycline Repressor, domain 2"/>
    <property type="match status" value="1"/>
</dbReference>
<dbReference type="HAMAP" id="MF_01839">
    <property type="entry name" value="NO_factor_SlmA"/>
    <property type="match status" value="1"/>
</dbReference>
<dbReference type="InterPro" id="IPR023772">
    <property type="entry name" value="DNA-bd_HTH_TetR-type_CS"/>
</dbReference>
<dbReference type="InterPro" id="IPR009057">
    <property type="entry name" value="Homeodomain-like_sf"/>
</dbReference>
<dbReference type="InterPro" id="IPR050109">
    <property type="entry name" value="HTH-type_TetR-like_transc_reg"/>
</dbReference>
<dbReference type="InterPro" id="IPR001647">
    <property type="entry name" value="HTH_TetR"/>
</dbReference>
<dbReference type="InterPro" id="IPR023769">
    <property type="entry name" value="NO_SlmA"/>
</dbReference>
<dbReference type="InterPro" id="IPR054580">
    <property type="entry name" value="SlmA-like_C"/>
</dbReference>
<dbReference type="InterPro" id="IPR036271">
    <property type="entry name" value="Tet_transcr_reg_TetR-rel_C_sf"/>
</dbReference>
<dbReference type="NCBIfam" id="NF007015">
    <property type="entry name" value="PRK09480.1"/>
    <property type="match status" value="1"/>
</dbReference>
<dbReference type="PANTHER" id="PTHR30055">
    <property type="entry name" value="HTH-TYPE TRANSCRIPTIONAL REGULATOR RUTR"/>
    <property type="match status" value="1"/>
</dbReference>
<dbReference type="PANTHER" id="PTHR30055:SF183">
    <property type="entry name" value="NUCLEOID OCCLUSION FACTOR SLMA"/>
    <property type="match status" value="1"/>
</dbReference>
<dbReference type="Pfam" id="PF22276">
    <property type="entry name" value="SlmA-like_C"/>
    <property type="match status" value="1"/>
</dbReference>
<dbReference type="Pfam" id="PF00440">
    <property type="entry name" value="TetR_N"/>
    <property type="match status" value="1"/>
</dbReference>
<dbReference type="SUPFAM" id="SSF46689">
    <property type="entry name" value="Homeodomain-like"/>
    <property type="match status" value="1"/>
</dbReference>
<dbReference type="SUPFAM" id="SSF48498">
    <property type="entry name" value="Tetracyclin repressor-like, C-terminal domain"/>
    <property type="match status" value="1"/>
</dbReference>
<dbReference type="PROSITE" id="PS01081">
    <property type="entry name" value="HTH_TETR_1"/>
    <property type="match status" value="1"/>
</dbReference>
<dbReference type="PROSITE" id="PS50977">
    <property type="entry name" value="HTH_TETR_2"/>
    <property type="match status" value="1"/>
</dbReference>